<protein>
    <recommendedName>
        <fullName evidence="2">Large ribosomal subunit protein bL27</fullName>
    </recommendedName>
    <alternativeName>
        <fullName evidence="3">50S ribosomal protein L27</fullName>
    </alternativeName>
</protein>
<comment type="PTM">
    <text evidence="1">The N-terminus is cleaved by ribosomal processing cysteine protease Prp.</text>
</comment>
<comment type="similarity">
    <text evidence="2">Belongs to the bacterial ribosomal protein bL27 family.</text>
</comment>
<evidence type="ECO:0000250" key="1">
    <source>
        <dbReference type="UniProtKB" id="Q2FXT0"/>
    </source>
</evidence>
<evidence type="ECO:0000255" key="2">
    <source>
        <dbReference type="HAMAP-Rule" id="MF_00539"/>
    </source>
</evidence>
<evidence type="ECO:0000305" key="3"/>
<organism>
    <name type="scientific">Clostridium botulinum (strain Hall / ATCC 3502 / NCTC 13319 / Type A)</name>
    <dbReference type="NCBI Taxonomy" id="441771"/>
    <lineage>
        <taxon>Bacteria</taxon>
        <taxon>Bacillati</taxon>
        <taxon>Bacillota</taxon>
        <taxon>Clostridia</taxon>
        <taxon>Eubacteriales</taxon>
        <taxon>Clostridiaceae</taxon>
        <taxon>Clostridium</taxon>
    </lineage>
</organism>
<feature type="propeptide" id="PRO_0000459875" evidence="1">
    <location>
        <begin position="1"/>
        <end position="9"/>
    </location>
</feature>
<feature type="chain" id="PRO_1000017454" description="Large ribosomal subunit protein bL27">
    <location>
        <begin position="10"/>
        <end position="100"/>
    </location>
</feature>
<keyword id="KW-1185">Reference proteome</keyword>
<keyword id="KW-0687">Ribonucleoprotein</keyword>
<keyword id="KW-0689">Ribosomal protein</keyword>
<reference key="1">
    <citation type="journal article" date="2007" name="Genome Res.">
        <title>Genome sequence of a proteolytic (Group I) Clostridium botulinum strain Hall A and comparative analysis of the clostridial genomes.</title>
        <authorList>
            <person name="Sebaihia M."/>
            <person name="Peck M.W."/>
            <person name="Minton N.P."/>
            <person name="Thomson N.R."/>
            <person name="Holden M.T.G."/>
            <person name="Mitchell W.J."/>
            <person name="Carter A.T."/>
            <person name="Bentley S.D."/>
            <person name="Mason D.R."/>
            <person name="Crossman L."/>
            <person name="Paul C.J."/>
            <person name="Ivens A."/>
            <person name="Wells-Bennik M.H.J."/>
            <person name="Davis I.J."/>
            <person name="Cerdeno-Tarraga A.M."/>
            <person name="Churcher C."/>
            <person name="Quail M.A."/>
            <person name="Chillingworth T."/>
            <person name="Feltwell T."/>
            <person name="Fraser A."/>
            <person name="Goodhead I."/>
            <person name="Hance Z."/>
            <person name="Jagels K."/>
            <person name="Larke N."/>
            <person name="Maddison M."/>
            <person name="Moule S."/>
            <person name="Mungall K."/>
            <person name="Norbertczak H."/>
            <person name="Rabbinowitsch E."/>
            <person name="Sanders M."/>
            <person name="Simmonds M."/>
            <person name="White B."/>
            <person name="Whithead S."/>
            <person name="Parkhill J."/>
        </authorList>
    </citation>
    <scope>NUCLEOTIDE SEQUENCE [LARGE SCALE GENOMIC DNA]</scope>
    <source>
        <strain>Hall / ATCC 3502 / NCTC 13319 / Type A</strain>
    </source>
</reference>
<reference key="2">
    <citation type="journal article" date="2007" name="PLoS ONE">
        <title>Analysis of the neurotoxin complex genes in Clostridium botulinum A1-A4 and B1 strains: BoNT/A3, /Ba4 and /B1 clusters are located within plasmids.</title>
        <authorList>
            <person name="Smith T.J."/>
            <person name="Hill K.K."/>
            <person name="Foley B.T."/>
            <person name="Detter J.C."/>
            <person name="Munk A.C."/>
            <person name="Bruce D.C."/>
            <person name="Doggett N.A."/>
            <person name="Smith L.A."/>
            <person name="Marks J.D."/>
            <person name="Xie G."/>
            <person name="Brettin T.S."/>
        </authorList>
    </citation>
    <scope>NUCLEOTIDE SEQUENCE [LARGE SCALE GENOMIC DNA]</scope>
    <source>
        <strain>Hall / ATCC 3502 / NCTC 13319 / Type A</strain>
    </source>
</reference>
<sequence>MLVMNLQLFAHKKGVGSSKNGRDSEAKRLGVKCSDGQFVLAGNILVRQRGTKIHPGLNVGRGGDDTLFAKIDGVVKYERLGRDKKKASVYPVEVEEVVAE</sequence>
<gene>
    <name evidence="2" type="primary">rpmA</name>
    <name type="ordered locus">CBO2987</name>
    <name type="ordered locus">CLC_2884</name>
</gene>
<accession>A5I667</accession>
<accession>A7G7F0</accession>
<proteinExistence type="inferred from homology"/>
<dbReference type="EMBL" id="CP000727">
    <property type="protein sequence ID" value="ABS38607.1"/>
    <property type="molecule type" value="Genomic_DNA"/>
</dbReference>
<dbReference type="EMBL" id="AM412317">
    <property type="protein sequence ID" value="CAL84549.1"/>
    <property type="molecule type" value="Genomic_DNA"/>
</dbReference>
<dbReference type="RefSeq" id="WP_003357774.1">
    <property type="nucleotide sequence ID" value="NC_009698.1"/>
</dbReference>
<dbReference type="RefSeq" id="YP_001255479.1">
    <property type="nucleotide sequence ID" value="NC_009495.1"/>
</dbReference>
<dbReference type="RefSeq" id="YP_001388715.1">
    <property type="nucleotide sequence ID" value="NC_009698.1"/>
</dbReference>
<dbReference type="SMR" id="A5I667"/>
<dbReference type="GeneID" id="92939708"/>
<dbReference type="KEGG" id="cbh:CLC_2884"/>
<dbReference type="KEGG" id="cbo:CBO2987"/>
<dbReference type="PATRIC" id="fig|413999.7.peg.2965"/>
<dbReference type="HOGENOM" id="CLU_095424_4_0_9"/>
<dbReference type="PRO" id="PR:A5I667"/>
<dbReference type="Proteomes" id="UP000001986">
    <property type="component" value="Chromosome"/>
</dbReference>
<dbReference type="GO" id="GO:0022625">
    <property type="term" value="C:cytosolic large ribosomal subunit"/>
    <property type="evidence" value="ECO:0000318"/>
    <property type="project" value="GO_Central"/>
</dbReference>
<dbReference type="GO" id="GO:0003735">
    <property type="term" value="F:structural constituent of ribosome"/>
    <property type="evidence" value="ECO:0000318"/>
    <property type="project" value="GO_Central"/>
</dbReference>
<dbReference type="GO" id="GO:0006412">
    <property type="term" value="P:translation"/>
    <property type="evidence" value="ECO:0007669"/>
    <property type="project" value="UniProtKB-UniRule"/>
</dbReference>
<dbReference type="FunFam" id="2.40.50.100:FF:000004">
    <property type="entry name" value="50S ribosomal protein L27"/>
    <property type="match status" value="1"/>
</dbReference>
<dbReference type="Gene3D" id="2.40.50.100">
    <property type="match status" value="1"/>
</dbReference>
<dbReference type="HAMAP" id="MF_00539">
    <property type="entry name" value="Ribosomal_bL27"/>
    <property type="match status" value="1"/>
</dbReference>
<dbReference type="InterPro" id="IPR001684">
    <property type="entry name" value="Ribosomal_bL27"/>
</dbReference>
<dbReference type="InterPro" id="IPR018261">
    <property type="entry name" value="Ribosomal_bL27_CS"/>
</dbReference>
<dbReference type="NCBIfam" id="TIGR00062">
    <property type="entry name" value="L27"/>
    <property type="match status" value="1"/>
</dbReference>
<dbReference type="PANTHER" id="PTHR15893:SF0">
    <property type="entry name" value="LARGE RIBOSOMAL SUBUNIT PROTEIN BL27M"/>
    <property type="match status" value="1"/>
</dbReference>
<dbReference type="PANTHER" id="PTHR15893">
    <property type="entry name" value="RIBOSOMAL PROTEIN L27"/>
    <property type="match status" value="1"/>
</dbReference>
<dbReference type="Pfam" id="PF01016">
    <property type="entry name" value="Ribosomal_L27"/>
    <property type="match status" value="1"/>
</dbReference>
<dbReference type="PRINTS" id="PR00063">
    <property type="entry name" value="RIBOSOMALL27"/>
</dbReference>
<dbReference type="SUPFAM" id="SSF110324">
    <property type="entry name" value="Ribosomal L27 protein-like"/>
    <property type="match status" value="1"/>
</dbReference>
<dbReference type="PROSITE" id="PS00831">
    <property type="entry name" value="RIBOSOMAL_L27"/>
    <property type="match status" value="1"/>
</dbReference>
<name>RL27_CLOBH</name>